<protein>
    <recommendedName>
        <fullName evidence="1">Transcriptional repressor NrdR</fullName>
    </recommendedName>
</protein>
<gene>
    <name evidence="1" type="primary">nrdR</name>
    <name type="ordered locus">Cbei_1123</name>
</gene>
<proteinExistence type="inferred from homology"/>
<reference key="1">
    <citation type="submission" date="2007-06" db="EMBL/GenBank/DDBJ databases">
        <title>Complete sequence of Clostridium beijerinckii NCIMB 8052.</title>
        <authorList>
            <consortium name="US DOE Joint Genome Institute"/>
            <person name="Copeland A."/>
            <person name="Lucas S."/>
            <person name="Lapidus A."/>
            <person name="Barry K."/>
            <person name="Detter J.C."/>
            <person name="Glavina del Rio T."/>
            <person name="Hammon N."/>
            <person name="Israni S."/>
            <person name="Dalin E."/>
            <person name="Tice H."/>
            <person name="Pitluck S."/>
            <person name="Sims D."/>
            <person name="Brettin T."/>
            <person name="Bruce D."/>
            <person name="Tapia R."/>
            <person name="Brainard J."/>
            <person name="Schmutz J."/>
            <person name="Larimer F."/>
            <person name="Land M."/>
            <person name="Hauser L."/>
            <person name="Kyrpides N."/>
            <person name="Mikhailova N."/>
            <person name="Bennet G."/>
            <person name="Cann I."/>
            <person name="Chen J.-S."/>
            <person name="Contreras A.L."/>
            <person name="Jones D."/>
            <person name="Kashket E."/>
            <person name="Mitchell W."/>
            <person name="Stoddard S."/>
            <person name="Schwarz W."/>
            <person name="Qureshi N."/>
            <person name="Young M."/>
            <person name="Shi Z."/>
            <person name="Ezeji T."/>
            <person name="White B."/>
            <person name="Blaschek H."/>
            <person name="Richardson P."/>
        </authorList>
    </citation>
    <scope>NUCLEOTIDE SEQUENCE [LARGE SCALE GENOMIC DNA]</scope>
    <source>
        <strain>ATCC 51743 / NCIMB 8052</strain>
    </source>
</reference>
<comment type="function">
    <text evidence="1">Negatively regulates transcription of bacterial ribonucleotide reductase nrd genes and operons by binding to NrdR-boxes.</text>
</comment>
<comment type="cofactor">
    <cofactor evidence="1">
        <name>Zn(2+)</name>
        <dbReference type="ChEBI" id="CHEBI:29105"/>
    </cofactor>
    <text evidence="1">Binds 1 zinc ion.</text>
</comment>
<comment type="similarity">
    <text evidence="1">Belongs to the NrdR family.</text>
</comment>
<name>NRDR_CLOB8</name>
<evidence type="ECO:0000255" key="1">
    <source>
        <dbReference type="HAMAP-Rule" id="MF_00440"/>
    </source>
</evidence>
<sequence>MKCPFCGFEESKVVDSRSTDDNTTIRRRRECLKCNKRYTTYEKIEDFPILVIKKDLTRENFNKEKIINGLIIACQKRPISRKQIEEIAYDIEKTISNSMLTEIPSNEIGEMVMARLKELDEISYVRFASVYRQFKDIDTFLEEIKNLRT</sequence>
<keyword id="KW-0067">ATP-binding</keyword>
<keyword id="KW-0238">DNA-binding</keyword>
<keyword id="KW-0479">Metal-binding</keyword>
<keyword id="KW-0547">Nucleotide-binding</keyword>
<keyword id="KW-0678">Repressor</keyword>
<keyword id="KW-0804">Transcription</keyword>
<keyword id="KW-0805">Transcription regulation</keyword>
<keyword id="KW-0862">Zinc</keyword>
<keyword id="KW-0863">Zinc-finger</keyword>
<feature type="chain" id="PRO_1000080733" description="Transcriptional repressor NrdR">
    <location>
        <begin position="1"/>
        <end position="149"/>
    </location>
</feature>
<feature type="domain" description="ATP-cone" evidence="1">
    <location>
        <begin position="49"/>
        <end position="139"/>
    </location>
</feature>
<feature type="zinc finger region" evidence="1">
    <location>
        <begin position="3"/>
        <end position="34"/>
    </location>
</feature>
<accession>A6LSH5</accession>
<organism>
    <name type="scientific">Clostridium beijerinckii (strain ATCC 51743 / NCIMB 8052)</name>
    <name type="common">Clostridium acetobutylicum</name>
    <dbReference type="NCBI Taxonomy" id="290402"/>
    <lineage>
        <taxon>Bacteria</taxon>
        <taxon>Bacillati</taxon>
        <taxon>Bacillota</taxon>
        <taxon>Clostridia</taxon>
        <taxon>Eubacteriales</taxon>
        <taxon>Clostridiaceae</taxon>
        <taxon>Clostridium</taxon>
    </lineage>
</organism>
<dbReference type="EMBL" id="CP000721">
    <property type="protein sequence ID" value="ABR33305.1"/>
    <property type="molecule type" value="Genomic_DNA"/>
</dbReference>
<dbReference type="RefSeq" id="WP_011968463.1">
    <property type="nucleotide sequence ID" value="NC_009617.1"/>
</dbReference>
<dbReference type="SMR" id="A6LSH5"/>
<dbReference type="GeneID" id="66344110"/>
<dbReference type="KEGG" id="cbe:Cbei_1123"/>
<dbReference type="eggNOG" id="COG1327">
    <property type="taxonomic scope" value="Bacteria"/>
</dbReference>
<dbReference type="HOGENOM" id="CLU_108412_0_0_9"/>
<dbReference type="Proteomes" id="UP000000565">
    <property type="component" value="Chromosome"/>
</dbReference>
<dbReference type="GO" id="GO:0005524">
    <property type="term" value="F:ATP binding"/>
    <property type="evidence" value="ECO:0007669"/>
    <property type="project" value="UniProtKB-KW"/>
</dbReference>
<dbReference type="GO" id="GO:0003677">
    <property type="term" value="F:DNA binding"/>
    <property type="evidence" value="ECO:0007669"/>
    <property type="project" value="UniProtKB-KW"/>
</dbReference>
<dbReference type="GO" id="GO:0008270">
    <property type="term" value="F:zinc ion binding"/>
    <property type="evidence" value="ECO:0007669"/>
    <property type="project" value="UniProtKB-UniRule"/>
</dbReference>
<dbReference type="GO" id="GO:0045892">
    <property type="term" value="P:negative regulation of DNA-templated transcription"/>
    <property type="evidence" value="ECO:0007669"/>
    <property type="project" value="UniProtKB-UniRule"/>
</dbReference>
<dbReference type="HAMAP" id="MF_00440">
    <property type="entry name" value="NrdR"/>
    <property type="match status" value="1"/>
</dbReference>
<dbReference type="InterPro" id="IPR005144">
    <property type="entry name" value="ATP-cone_dom"/>
</dbReference>
<dbReference type="InterPro" id="IPR055173">
    <property type="entry name" value="NrdR-like_N"/>
</dbReference>
<dbReference type="InterPro" id="IPR003796">
    <property type="entry name" value="RNR_NrdR-like"/>
</dbReference>
<dbReference type="NCBIfam" id="TIGR00244">
    <property type="entry name" value="transcriptional regulator NrdR"/>
    <property type="match status" value="1"/>
</dbReference>
<dbReference type="PANTHER" id="PTHR30455">
    <property type="entry name" value="TRANSCRIPTIONAL REPRESSOR NRDR"/>
    <property type="match status" value="1"/>
</dbReference>
<dbReference type="PANTHER" id="PTHR30455:SF2">
    <property type="entry name" value="TRANSCRIPTIONAL REPRESSOR NRDR"/>
    <property type="match status" value="1"/>
</dbReference>
<dbReference type="Pfam" id="PF03477">
    <property type="entry name" value="ATP-cone"/>
    <property type="match status" value="1"/>
</dbReference>
<dbReference type="Pfam" id="PF22811">
    <property type="entry name" value="Zn_ribbon_NrdR"/>
    <property type="match status" value="1"/>
</dbReference>
<dbReference type="PROSITE" id="PS51161">
    <property type="entry name" value="ATP_CONE"/>
    <property type="match status" value="1"/>
</dbReference>